<reference key="1">
    <citation type="submission" date="2003-06" db="EMBL/GenBank/DDBJ databases">
        <title>The complete genome sequence of Haemophilus ducreyi.</title>
        <authorList>
            <person name="Munson R.S. Jr."/>
            <person name="Ray W.C."/>
            <person name="Mahairas G."/>
            <person name="Sabo P."/>
            <person name="Mungur R."/>
            <person name="Johnson L."/>
            <person name="Nguyen D."/>
            <person name="Wang J."/>
            <person name="Forst C."/>
            <person name="Hood L."/>
        </authorList>
    </citation>
    <scope>NUCLEOTIDE SEQUENCE [LARGE SCALE GENOMIC DNA]</scope>
    <source>
        <strain>35000HP / ATCC 700724</strain>
    </source>
</reference>
<evidence type="ECO:0000255" key="1">
    <source>
        <dbReference type="HAMAP-Rule" id="MF_00418"/>
    </source>
</evidence>
<evidence type="ECO:0000305" key="2"/>
<accession>Q7VM87</accession>
<dbReference type="EC" id="4.3.3.7" evidence="1"/>
<dbReference type="EMBL" id="AE017143">
    <property type="protein sequence ID" value="AAP95973.1"/>
    <property type="molecule type" value="Genomic_DNA"/>
</dbReference>
<dbReference type="SMR" id="Q7VM87"/>
<dbReference type="STRING" id="233412.HD_1107"/>
<dbReference type="KEGG" id="hdu:HD_1107"/>
<dbReference type="eggNOG" id="COG0329">
    <property type="taxonomic scope" value="Bacteria"/>
</dbReference>
<dbReference type="HOGENOM" id="CLU_049343_7_1_6"/>
<dbReference type="UniPathway" id="UPA00034">
    <property type="reaction ID" value="UER00017"/>
</dbReference>
<dbReference type="Proteomes" id="UP000001022">
    <property type="component" value="Chromosome"/>
</dbReference>
<dbReference type="GO" id="GO:0005829">
    <property type="term" value="C:cytosol"/>
    <property type="evidence" value="ECO:0007669"/>
    <property type="project" value="TreeGrafter"/>
</dbReference>
<dbReference type="GO" id="GO:0008840">
    <property type="term" value="F:4-hydroxy-tetrahydrodipicolinate synthase activity"/>
    <property type="evidence" value="ECO:0007669"/>
    <property type="project" value="UniProtKB-UniRule"/>
</dbReference>
<dbReference type="GO" id="GO:0019877">
    <property type="term" value="P:diaminopimelate biosynthetic process"/>
    <property type="evidence" value="ECO:0007669"/>
    <property type="project" value="UniProtKB-UniRule"/>
</dbReference>
<dbReference type="GO" id="GO:0009089">
    <property type="term" value="P:lysine biosynthetic process via diaminopimelate"/>
    <property type="evidence" value="ECO:0007669"/>
    <property type="project" value="UniProtKB-UniRule"/>
</dbReference>
<dbReference type="CDD" id="cd00950">
    <property type="entry name" value="DHDPS"/>
    <property type="match status" value="1"/>
</dbReference>
<dbReference type="Gene3D" id="3.20.20.70">
    <property type="entry name" value="Aldolase class I"/>
    <property type="match status" value="1"/>
</dbReference>
<dbReference type="HAMAP" id="MF_00418">
    <property type="entry name" value="DapA"/>
    <property type="match status" value="1"/>
</dbReference>
<dbReference type="InterPro" id="IPR013785">
    <property type="entry name" value="Aldolase_TIM"/>
</dbReference>
<dbReference type="InterPro" id="IPR005263">
    <property type="entry name" value="DapA"/>
</dbReference>
<dbReference type="InterPro" id="IPR002220">
    <property type="entry name" value="DapA-like"/>
</dbReference>
<dbReference type="InterPro" id="IPR020625">
    <property type="entry name" value="Schiff_base-form_aldolases_AS"/>
</dbReference>
<dbReference type="InterPro" id="IPR020624">
    <property type="entry name" value="Schiff_base-form_aldolases_CS"/>
</dbReference>
<dbReference type="NCBIfam" id="TIGR00674">
    <property type="entry name" value="dapA"/>
    <property type="match status" value="1"/>
</dbReference>
<dbReference type="PANTHER" id="PTHR12128:SF66">
    <property type="entry name" value="4-HYDROXY-2-OXOGLUTARATE ALDOLASE, MITOCHONDRIAL"/>
    <property type="match status" value="1"/>
</dbReference>
<dbReference type="PANTHER" id="PTHR12128">
    <property type="entry name" value="DIHYDRODIPICOLINATE SYNTHASE"/>
    <property type="match status" value="1"/>
</dbReference>
<dbReference type="Pfam" id="PF00701">
    <property type="entry name" value="DHDPS"/>
    <property type="match status" value="1"/>
</dbReference>
<dbReference type="PIRSF" id="PIRSF001365">
    <property type="entry name" value="DHDPS"/>
    <property type="match status" value="1"/>
</dbReference>
<dbReference type="PRINTS" id="PR00146">
    <property type="entry name" value="DHPICSNTHASE"/>
</dbReference>
<dbReference type="SMART" id="SM01130">
    <property type="entry name" value="DHDPS"/>
    <property type="match status" value="1"/>
</dbReference>
<dbReference type="SUPFAM" id="SSF51569">
    <property type="entry name" value="Aldolase"/>
    <property type="match status" value="1"/>
</dbReference>
<dbReference type="PROSITE" id="PS00665">
    <property type="entry name" value="DHDPS_1"/>
    <property type="match status" value="1"/>
</dbReference>
<dbReference type="PROSITE" id="PS00666">
    <property type="entry name" value="DHDPS_2"/>
    <property type="match status" value="1"/>
</dbReference>
<gene>
    <name evidence="1" type="primary">dapA</name>
    <name type="ordered locus">HD_1107</name>
</gene>
<name>DAPA_HAEDU</name>
<protein>
    <recommendedName>
        <fullName evidence="1">4-hydroxy-tetrahydrodipicolinate synthase</fullName>
        <shortName evidence="1">HTPA synthase</shortName>
        <ecNumber evidence="1">4.3.3.7</ecNumber>
    </recommendedName>
</protein>
<keyword id="KW-0028">Amino-acid biosynthesis</keyword>
<keyword id="KW-0963">Cytoplasm</keyword>
<keyword id="KW-0220">Diaminopimelate biosynthesis</keyword>
<keyword id="KW-0456">Lyase</keyword>
<keyword id="KW-0457">Lysine biosynthesis</keyword>
<keyword id="KW-1185">Reference proteome</keyword>
<keyword id="KW-0704">Schiff base</keyword>
<feature type="chain" id="PRO_0000103114" description="4-hydroxy-tetrahydrodipicolinate synthase">
    <location>
        <begin position="1"/>
        <end position="297"/>
    </location>
</feature>
<feature type="active site" description="Proton donor/acceptor" evidence="1">
    <location>
        <position position="138"/>
    </location>
</feature>
<feature type="active site" description="Schiff-base intermediate with substrate" evidence="1">
    <location>
        <position position="166"/>
    </location>
</feature>
<feature type="binding site" evidence="1">
    <location>
        <position position="50"/>
    </location>
    <ligand>
        <name>pyruvate</name>
        <dbReference type="ChEBI" id="CHEBI:15361"/>
    </ligand>
</feature>
<feature type="binding site" evidence="1">
    <location>
        <position position="208"/>
    </location>
    <ligand>
        <name>pyruvate</name>
        <dbReference type="ChEBI" id="CHEBI:15361"/>
    </ligand>
</feature>
<feature type="site" description="Part of a proton relay during catalysis" evidence="1">
    <location>
        <position position="49"/>
    </location>
</feature>
<feature type="site" description="Part of a proton relay during catalysis" evidence="1">
    <location>
        <position position="112"/>
    </location>
</feature>
<proteinExistence type="inferred from homology"/>
<sequence length="297" mass="31751">MIMSVPLFHGSIVALLTPMTHGEVNYQEIKNLVEYHIQAGSHGIVAMGTTGESTTLSIDEHVKVIKKTVEFADGRIPIIAGSGSNATSEAVTITKLLNGVGVVGCLSVVPYYNKPTQEGLYLHYKAIAESTELPQILYNVPSRTGCDLKPETIGRLSEIPNIIGVKEATGDLTRLPLIKTLAGEDFIFLSGDDATGLESMKLGGQGVISVTNNLAAADMAKMCELVLAGNFAEAEAINQRLIDLHHDLFIEANPIPVKWAAYKLGLISEPSLRLPLTPLSETAQPTILKALQKAGLI</sequence>
<organism>
    <name type="scientific">Haemophilus ducreyi (strain 35000HP / ATCC 700724)</name>
    <dbReference type="NCBI Taxonomy" id="233412"/>
    <lineage>
        <taxon>Bacteria</taxon>
        <taxon>Pseudomonadati</taxon>
        <taxon>Pseudomonadota</taxon>
        <taxon>Gammaproteobacteria</taxon>
        <taxon>Pasteurellales</taxon>
        <taxon>Pasteurellaceae</taxon>
        <taxon>Haemophilus</taxon>
    </lineage>
</organism>
<comment type="function">
    <text evidence="1">Catalyzes the condensation of (S)-aspartate-beta-semialdehyde [(S)-ASA] and pyruvate to 4-hydroxy-tetrahydrodipicolinate (HTPA).</text>
</comment>
<comment type="catalytic activity">
    <reaction evidence="1">
        <text>L-aspartate 4-semialdehyde + pyruvate = (2S,4S)-4-hydroxy-2,3,4,5-tetrahydrodipicolinate + H2O + H(+)</text>
        <dbReference type="Rhea" id="RHEA:34171"/>
        <dbReference type="ChEBI" id="CHEBI:15361"/>
        <dbReference type="ChEBI" id="CHEBI:15377"/>
        <dbReference type="ChEBI" id="CHEBI:15378"/>
        <dbReference type="ChEBI" id="CHEBI:67139"/>
        <dbReference type="ChEBI" id="CHEBI:537519"/>
        <dbReference type="EC" id="4.3.3.7"/>
    </reaction>
</comment>
<comment type="pathway">
    <text evidence="1">Amino-acid biosynthesis; L-lysine biosynthesis via DAP pathway; (S)-tetrahydrodipicolinate from L-aspartate: step 3/4.</text>
</comment>
<comment type="subunit">
    <text evidence="1">Homotetramer; dimer of dimers.</text>
</comment>
<comment type="subcellular location">
    <subcellularLocation>
        <location evidence="1">Cytoplasm</location>
    </subcellularLocation>
</comment>
<comment type="similarity">
    <text evidence="1">Belongs to the DapA family.</text>
</comment>
<comment type="caution">
    <text evidence="2">Was originally thought to be a dihydrodipicolinate synthase (DHDPS), catalyzing the condensation of (S)-aspartate-beta-semialdehyde [(S)-ASA] and pyruvate to dihydrodipicolinate (DHDP). However, it was shown in E.coli that the product of the enzymatic reaction is not dihydrodipicolinate but in fact (4S)-4-hydroxy-2,3,4,5-tetrahydro-(2S)-dipicolinic acid (HTPA), and that the consecutive dehydration reaction leading to DHDP is not spontaneous but catalyzed by DapB.</text>
</comment>